<name>RL10_METCA</name>
<feature type="chain" id="PRO_0000154662" description="Large ribosomal subunit protein uL10">
    <location>
        <begin position="1"/>
        <end position="175"/>
    </location>
</feature>
<evidence type="ECO:0000255" key="1">
    <source>
        <dbReference type="HAMAP-Rule" id="MF_00362"/>
    </source>
</evidence>
<evidence type="ECO:0000305" key="2"/>
<keyword id="KW-1185">Reference proteome</keyword>
<keyword id="KW-0687">Ribonucleoprotein</keyword>
<keyword id="KW-0689">Ribosomal protein</keyword>
<keyword id="KW-0694">RNA-binding</keyword>
<keyword id="KW-0699">rRNA-binding</keyword>
<protein>
    <recommendedName>
        <fullName evidence="1">Large ribosomal subunit protein uL10</fullName>
    </recommendedName>
    <alternativeName>
        <fullName evidence="2">50S ribosomal protein L10</fullName>
    </alternativeName>
</protein>
<organism>
    <name type="scientific">Methylococcus capsulatus (strain ATCC 33009 / NCIMB 11132 / Bath)</name>
    <dbReference type="NCBI Taxonomy" id="243233"/>
    <lineage>
        <taxon>Bacteria</taxon>
        <taxon>Pseudomonadati</taxon>
        <taxon>Pseudomonadota</taxon>
        <taxon>Gammaproteobacteria</taxon>
        <taxon>Methylococcales</taxon>
        <taxon>Methylococcaceae</taxon>
        <taxon>Methylococcus</taxon>
    </lineage>
</organism>
<reference key="1">
    <citation type="journal article" date="2004" name="PLoS Biol.">
        <title>Genomic insights into methanotrophy: the complete genome sequence of Methylococcus capsulatus (Bath).</title>
        <authorList>
            <person name="Ward N.L."/>
            <person name="Larsen O."/>
            <person name="Sakwa J."/>
            <person name="Bruseth L."/>
            <person name="Khouri H.M."/>
            <person name="Durkin A.S."/>
            <person name="Dimitrov G."/>
            <person name="Jiang L."/>
            <person name="Scanlan D."/>
            <person name="Kang K.H."/>
            <person name="Lewis M.R."/>
            <person name="Nelson K.E."/>
            <person name="Methe B.A."/>
            <person name="Wu M."/>
            <person name="Heidelberg J.F."/>
            <person name="Paulsen I.T."/>
            <person name="Fouts D.E."/>
            <person name="Ravel J."/>
            <person name="Tettelin H."/>
            <person name="Ren Q."/>
            <person name="Read T.D."/>
            <person name="DeBoy R.T."/>
            <person name="Seshadri R."/>
            <person name="Salzberg S.L."/>
            <person name="Jensen H.B."/>
            <person name="Birkeland N.K."/>
            <person name="Nelson W.C."/>
            <person name="Dodson R.J."/>
            <person name="Grindhaug S.H."/>
            <person name="Holt I.E."/>
            <person name="Eidhammer I."/>
            <person name="Jonasen I."/>
            <person name="Vanaken S."/>
            <person name="Utterback T.R."/>
            <person name="Feldblyum T.V."/>
            <person name="Fraser C.M."/>
            <person name="Lillehaug J.R."/>
            <person name="Eisen J.A."/>
        </authorList>
    </citation>
    <scope>NUCLEOTIDE SEQUENCE [LARGE SCALE GENOMIC DNA]</scope>
    <source>
        <strain>ATCC 33009 / NCIMB 11132 / Bath</strain>
    </source>
</reference>
<proteinExistence type="inferred from homology"/>
<sequence length="175" mass="18718">MALRLDDKKAVVAEVAAVAARAHSAVAAEYRGLSVSALTQLRKEARESGVYLRVVKNTLARKAVEGTGFECMQDGLVGPLILAFSLEDPGSAARVVSAFAKTNDKLVVKLVAVGGKQYGPSELERLASLPNREQAISMLMGTMKAPIEKFVRTLAEPHAKFVRTLAAVRDQKQAA</sequence>
<dbReference type="EMBL" id="AE017282">
    <property type="protein sequence ID" value="AAU92678.1"/>
    <property type="molecule type" value="Genomic_DNA"/>
</dbReference>
<dbReference type="RefSeq" id="WP_010960364.1">
    <property type="nucleotide sequence ID" value="NC_002977.6"/>
</dbReference>
<dbReference type="SMR" id="Q60A08"/>
<dbReference type="STRING" id="243233.MCA1064"/>
<dbReference type="GeneID" id="88223361"/>
<dbReference type="KEGG" id="mca:MCA1064"/>
<dbReference type="eggNOG" id="COG0244">
    <property type="taxonomic scope" value="Bacteria"/>
</dbReference>
<dbReference type="HOGENOM" id="CLU_092227_0_1_6"/>
<dbReference type="Proteomes" id="UP000006821">
    <property type="component" value="Chromosome"/>
</dbReference>
<dbReference type="GO" id="GO:0015934">
    <property type="term" value="C:large ribosomal subunit"/>
    <property type="evidence" value="ECO:0007669"/>
    <property type="project" value="InterPro"/>
</dbReference>
<dbReference type="GO" id="GO:0070180">
    <property type="term" value="F:large ribosomal subunit rRNA binding"/>
    <property type="evidence" value="ECO:0007669"/>
    <property type="project" value="UniProtKB-UniRule"/>
</dbReference>
<dbReference type="GO" id="GO:0003735">
    <property type="term" value="F:structural constituent of ribosome"/>
    <property type="evidence" value="ECO:0007669"/>
    <property type="project" value="InterPro"/>
</dbReference>
<dbReference type="GO" id="GO:0006412">
    <property type="term" value="P:translation"/>
    <property type="evidence" value="ECO:0007669"/>
    <property type="project" value="UniProtKB-UniRule"/>
</dbReference>
<dbReference type="CDD" id="cd05797">
    <property type="entry name" value="Ribosomal_L10"/>
    <property type="match status" value="1"/>
</dbReference>
<dbReference type="Gene3D" id="3.30.70.1730">
    <property type="match status" value="1"/>
</dbReference>
<dbReference type="Gene3D" id="6.10.250.2350">
    <property type="match status" value="2"/>
</dbReference>
<dbReference type="HAMAP" id="MF_00362">
    <property type="entry name" value="Ribosomal_uL10"/>
    <property type="match status" value="1"/>
</dbReference>
<dbReference type="InterPro" id="IPR001790">
    <property type="entry name" value="Ribosomal_uL10"/>
</dbReference>
<dbReference type="InterPro" id="IPR043141">
    <property type="entry name" value="Ribosomal_uL10-like_sf"/>
</dbReference>
<dbReference type="InterPro" id="IPR022973">
    <property type="entry name" value="Ribosomal_uL10_bac"/>
</dbReference>
<dbReference type="InterPro" id="IPR047865">
    <property type="entry name" value="Ribosomal_uL10_bac_type"/>
</dbReference>
<dbReference type="InterPro" id="IPR002363">
    <property type="entry name" value="Ribosomal_uL10_CS_bac"/>
</dbReference>
<dbReference type="NCBIfam" id="NF000955">
    <property type="entry name" value="PRK00099.1-1"/>
    <property type="match status" value="1"/>
</dbReference>
<dbReference type="PANTHER" id="PTHR11560">
    <property type="entry name" value="39S RIBOSOMAL PROTEIN L10, MITOCHONDRIAL"/>
    <property type="match status" value="1"/>
</dbReference>
<dbReference type="Pfam" id="PF00466">
    <property type="entry name" value="Ribosomal_L10"/>
    <property type="match status" value="1"/>
</dbReference>
<dbReference type="SUPFAM" id="SSF160369">
    <property type="entry name" value="Ribosomal protein L10-like"/>
    <property type="match status" value="1"/>
</dbReference>
<dbReference type="PROSITE" id="PS01109">
    <property type="entry name" value="RIBOSOMAL_L10"/>
    <property type="match status" value="1"/>
</dbReference>
<comment type="function">
    <text evidence="1">Forms part of the ribosomal stalk, playing a central role in the interaction of the ribosome with GTP-bound translation factors.</text>
</comment>
<comment type="subunit">
    <text evidence="1">Part of the ribosomal stalk of the 50S ribosomal subunit. The N-terminus interacts with L11 and the large rRNA to form the base of the stalk. The C-terminus forms an elongated spine to which L12 dimers bind in a sequential fashion forming a multimeric L10(L12)X complex.</text>
</comment>
<comment type="similarity">
    <text evidence="1">Belongs to the universal ribosomal protein uL10 family.</text>
</comment>
<accession>Q60A08</accession>
<gene>
    <name evidence="1" type="primary">rplJ</name>
    <name type="ordered locus">MCA1064</name>
</gene>